<proteinExistence type="inferred from homology"/>
<gene>
    <name evidence="1" type="primary">hisZ</name>
    <name type="ordered locus">BURPS1710b_2345</name>
</gene>
<evidence type="ECO:0000255" key="1">
    <source>
        <dbReference type="HAMAP-Rule" id="MF_00125"/>
    </source>
</evidence>
<sequence>MSTWLLPENIADVLPSEARKIEELRRRLLDRFRSYGYEMVMPPLLEYLESLLTSGGNELRLRTFKLVDQVSGRTLGLRADMTPQVARIDAHLLNRQGVTRLCYAGPVLHTRPRGLHASREQLQIGAEIYGHAGLEADQEIQQLMLDALHLTGLKKIRLDLCHAGVLAALFARDAAAAERGEALYEALAGKDVPRLNELTDDLGADTRAALRALPRLYGDASVLDDARRLLPALPEIARALDDLAHLAAQVKDAEVAIDLADLRGYAYHSGAMFAAYVDGVPNAVAHGGRYDHVGQAYGRARPATGFSLDLREIARISPVEARGAAILAPWKQDDALRAAVGALRDAGEVVIQALPGHDHVLDEFACDRALVERDGAWVIEPR</sequence>
<name>HISZ_BURP1</name>
<reference key="1">
    <citation type="journal article" date="2010" name="Genome Biol. Evol.">
        <title>Continuing evolution of Burkholderia mallei through genome reduction and large-scale rearrangements.</title>
        <authorList>
            <person name="Losada L."/>
            <person name="Ronning C.M."/>
            <person name="DeShazer D."/>
            <person name="Woods D."/>
            <person name="Fedorova N."/>
            <person name="Kim H.S."/>
            <person name="Shabalina S.A."/>
            <person name="Pearson T.R."/>
            <person name="Brinkac L."/>
            <person name="Tan P."/>
            <person name="Nandi T."/>
            <person name="Crabtree J."/>
            <person name="Badger J."/>
            <person name="Beckstrom-Sternberg S."/>
            <person name="Saqib M."/>
            <person name="Schutzer S.E."/>
            <person name="Keim P."/>
            <person name="Nierman W.C."/>
        </authorList>
    </citation>
    <scope>NUCLEOTIDE SEQUENCE [LARGE SCALE GENOMIC DNA]</scope>
    <source>
        <strain>1710b</strain>
    </source>
</reference>
<feature type="chain" id="PRO_0000242828" description="ATP phosphoribosyltransferase regulatory subunit">
    <location>
        <begin position="1"/>
        <end position="382"/>
    </location>
</feature>
<protein>
    <recommendedName>
        <fullName evidence="1">ATP phosphoribosyltransferase regulatory subunit</fullName>
    </recommendedName>
</protein>
<accession>Q3JRR3</accession>
<organism>
    <name type="scientific">Burkholderia pseudomallei (strain 1710b)</name>
    <dbReference type="NCBI Taxonomy" id="320372"/>
    <lineage>
        <taxon>Bacteria</taxon>
        <taxon>Pseudomonadati</taxon>
        <taxon>Pseudomonadota</taxon>
        <taxon>Betaproteobacteria</taxon>
        <taxon>Burkholderiales</taxon>
        <taxon>Burkholderiaceae</taxon>
        <taxon>Burkholderia</taxon>
        <taxon>pseudomallei group</taxon>
    </lineage>
</organism>
<comment type="function">
    <text evidence="1">Required for the first step of histidine biosynthesis. May allow the feedback regulation of ATP phosphoribosyltransferase activity by histidine.</text>
</comment>
<comment type="pathway">
    <text evidence="1">Amino-acid biosynthesis; L-histidine biosynthesis; L-histidine from 5-phospho-alpha-D-ribose 1-diphosphate: step 1/9.</text>
</comment>
<comment type="subunit">
    <text evidence="1">Heteromultimer composed of HisG and HisZ subunits.</text>
</comment>
<comment type="subcellular location">
    <subcellularLocation>
        <location evidence="1">Cytoplasm</location>
    </subcellularLocation>
</comment>
<comment type="miscellaneous">
    <text>This function is generally fulfilled by the C-terminal part of HisG, which is missing in some bacteria such as this one.</text>
</comment>
<comment type="similarity">
    <text evidence="1">Belongs to the class-II aminoacyl-tRNA synthetase family. HisZ subfamily.</text>
</comment>
<keyword id="KW-0028">Amino-acid biosynthesis</keyword>
<keyword id="KW-0963">Cytoplasm</keyword>
<keyword id="KW-0368">Histidine biosynthesis</keyword>
<dbReference type="EMBL" id="CP000124">
    <property type="protein sequence ID" value="ABA49086.1"/>
    <property type="molecule type" value="Genomic_DNA"/>
</dbReference>
<dbReference type="RefSeq" id="WP_004192327.1">
    <property type="nucleotide sequence ID" value="NC_007434.1"/>
</dbReference>
<dbReference type="SMR" id="Q3JRR3"/>
<dbReference type="EnsemblBacteria" id="ABA49086">
    <property type="protein sequence ID" value="ABA49086"/>
    <property type="gene ID" value="BURPS1710b_2345"/>
</dbReference>
<dbReference type="KEGG" id="bpm:BURPS1710b_2345"/>
<dbReference type="HOGENOM" id="CLU_025113_0_1_4"/>
<dbReference type="UniPathway" id="UPA00031">
    <property type="reaction ID" value="UER00006"/>
</dbReference>
<dbReference type="Proteomes" id="UP000002700">
    <property type="component" value="Chromosome I"/>
</dbReference>
<dbReference type="GO" id="GO:0005737">
    <property type="term" value="C:cytoplasm"/>
    <property type="evidence" value="ECO:0007669"/>
    <property type="project" value="UniProtKB-SubCell"/>
</dbReference>
<dbReference type="GO" id="GO:0004821">
    <property type="term" value="F:histidine-tRNA ligase activity"/>
    <property type="evidence" value="ECO:0007669"/>
    <property type="project" value="TreeGrafter"/>
</dbReference>
<dbReference type="GO" id="GO:0006427">
    <property type="term" value="P:histidyl-tRNA aminoacylation"/>
    <property type="evidence" value="ECO:0007669"/>
    <property type="project" value="TreeGrafter"/>
</dbReference>
<dbReference type="GO" id="GO:0000105">
    <property type="term" value="P:L-histidine biosynthetic process"/>
    <property type="evidence" value="ECO:0007669"/>
    <property type="project" value="UniProtKB-UniRule"/>
</dbReference>
<dbReference type="CDD" id="cd00773">
    <property type="entry name" value="HisRS-like_core"/>
    <property type="match status" value="1"/>
</dbReference>
<dbReference type="Gene3D" id="3.30.930.10">
    <property type="entry name" value="Bira Bifunctional Protein, Domain 2"/>
    <property type="match status" value="1"/>
</dbReference>
<dbReference type="HAMAP" id="MF_00125">
    <property type="entry name" value="HisZ"/>
    <property type="match status" value="1"/>
</dbReference>
<dbReference type="InterPro" id="IPR045864">
    <property type="entry name" value="aa-tRNA-synth_II/BPL/LPL"/>
</dbReference>
<dbReference type="InterPro" id="IPR041715">
    <property type="entry name" value="HisRS-like_core"/>
</dbReference>
<dbReference type="InterPro" id="IPR004516">
    <property type="entry name" value="HisRS/HisZ"/>
</dbReference>
<dbReference type="InterPro" id="IPR004517">
    <property type="entry name" value="HisZ"/>
</dbReference>
<dbReference type="NCBIfam" id="TIGR00443">
    <property type="entry name" value="hisZ_biosyn_reg"/>
    <property type="match status" value="1"/>
</dbReference>
<dbReference type="NCBIfam" id="NF008935">
    <property type="entry name" value="PRK12292.1-1"/>
    <property type="match status" value="1"/>
</dbReference>
<dbReference type="NCBIfam" id="NF009086">
    <property type="entry name" value="PRK12421.1"/>
    <property type="match status" value="1"/>
</dbReference>
<dbReference type="PANTHER" id="PTHR43707:SF1">
    <property type="entry name" value="HISTIDINE--TRNA LIGASE, MITOCHONDRIAL-RELATED"/>
    <property type="match status" value="1"/>
</dbReference>
<dbReference type="PANTHER" id="PTHR43707">
    <property type="entry name" value="HISTIDYL-TRNA SYNTHETASE"/>
    <property type="match status" value="1"/>
</dbReference>
<dbReference type="Pfam" id="PF13393">
    <property type="entry name" value="tRNA-synt_His"/>
    <property type="match status" value="1"/>
</dbReference>
<dbReference type="PIRSF" id="PIRSF001549">
    <property type="entry name" value="His-tRNA_synth"/>
    <property type="match status" value="1"/>
</dbReference>
<dbReference type="SUPFAM" id="SSF55681">
    <property type="entry name" value="Class II aaRS and biotin synthetases"/>
    <property type="match status" value="1"/>
</dbReference>